<feature type="peptide" id="PRO_0000044024" description="trp operon leader peptide">
    <location>
        <begin position="1"/>
        <end position="14"/>
    </location>
</feature>
<reference key="1">
    <citation type="journal article" date="2001" name="Nature">
        <title>Genome sequence of enterohaemorrhagic Escherichia coli O157:H7.</title>
        <authorList>
            <person name="Perna N.T."/>
            <person name="Plunkett G. III"/>
            <person name="Burland V."/>
            <person name="Mau B."/>
            <person name="Glasner J.D."/>
            <person name="Rose D.J."/>
            <person name="Mayhew G.F."/>
            <person name="Evans P.S."/>
            <person name="Gregor J."/>
            <person name="Kirkpatrick H.A."/>
            <person name="Posfai G."/>
            <person name="Hackett J."/>
            <person name="Klink S."/>
            <person name="Boutin A."/>
            <person name="Shao Y."/>
            <person name="Miller L."/>
            <person name="Grotbeck E.J."/>
            <person name="Davis N.W."/>
            <person name="Lim A."/>
            <person name="Dimalanta E.T."/>
            <person name="Potamousis K."/>
            <person name="Apodaca J."/>
            <person name="Anantharaman T.S."/>
            <person name="Lin J."/>
            <person name="Yen G."/>
            <person name="Schwartz D.C."/>
            <person name="Welch R.A."/>
            <person name="Blattner F.R."/>
        </authorList>
    </citation>
    <scope>NUCLEOTIDE SEQUENCE [LARGE SCALE GENOMIC DNA]</scope>
    <source>
        <strain>O157:H7 / EDL933 / ATCC 700927 / EHEC</strain>
    </source>
</reference>
<reference key="2">
    <citation type="journal article" date="2001" name="DNA Res.">
        <title>Complete genome sequence of enterohemorrhagic Escherichia coli O157:H7 and genomic comparison with a laboratory strain K-12.</title>
        <authorList>
            <person name="Hayashi T."/>
            <person name="Makino K."/>
            <person name="Ohnishi M."/>
            <person name="Kurokawa K."/>
            <person name="Ishii K."/>
            <person name="Yokoyama K."/>
            <person name="Han C.-G."/>
            <person name="Ohtsubo E."/>
            <person name="Nakayama K."/>
            <person name="Murata T."/>
            <person name="Tanaka M."/>
            <person name="Tobe T."/>
            <person name="Iida T."/>
            <person name="Takami H."/>
            <person name="Honda T."/>
            <person name="Sasakawa C."/>
            <person name="Ogasawara N."/>
            <person name="Yasunaga T."/>
            <person name="Kuhara S."/>
            <person name="Shiba T."/>
            <person name="Hattori M."/>
            <person name="Shinagawa H."/>
        </authorList>
    </citation>
    <scope>NUCLEOTIDE SEQUENCE [LARGE SCALE GENOMIC DNA]</scope>
    <source>
        <strain>O157:H7 / Sakai / RIMD 0509952 / EHEC</strain>
    </source>
</reference>
<protein>
    <recommendedName>
        <fullName>trp operon leader peptide</fullName>
    </recommendedName>
</protein>
<gene>
    <name type="primary">trpL</name>
    <name type="ordered locus">Z2545</name>
    <name type="ordered locus">ECs1837</name>
</gene>
<organism>
    <name type="scientific">Escherichia coli O157:H7</name>
    <dbReference type="NCBI Taxonomy" id="83334"/>
    <lineage>
        <taxon>Bacteria</taxon>
        <taxon>Pseudomonadati</taxon>
        <taxon>Pseudomonadota</taxon>
        <taxon>Gammaproteobacteria</taxon>
        <taxon>Enterobacterales</taxon>
        <taxon>Enterobacteriaceae</taxon>
        <taxon>Escherichia</taxon>
    </lineage>
</organism>
<keyword id="KW-0028">Amino-acid biosynthesis</keyword>
<keyword id="KW-0057">Aromatic amino acid biosynthesis</keyword>
<keyword id="KW-0428">Leader peptide</keyword>
<keyword id="KW-1185">Reference proteome</keyword>
<keyword id="KW-0822">Tryptophan biosynthesis</keyword>
<evidence type="ECO:0000250" key="1"/>
<dbReference type="EMBL" id="AE005174">
    <property type="protein sequence ID" value="AAG56550.1"/>
    <property type="molecule type" value="Genomic_DNA"/>
</dbReference>
<dbReference type="EMBL" id="BA000007">
    <property type="protein sequence ID" value="BAB35260.1"/>
    <property type="molecule type" value="Genomic_DNA"/>
</dbReference>
<dbReference type="PIR" id="B85761">
    <property type="entry name" value="B85761"/>
</dbReference>
<dbReference type="PIR" id="E90858">
    <property type="entry name" value="E90858"/>
</dbReference>
<dbReference type="RefSeq" id="WP_001700591.1">
    <property type="nucleotide sequence ID" value="NZ_VOAI01000015.1"/>
</dbReference>
<dbReference type="STRING" id="155864.Z2545"/>
<dbReference type="GeneID" id="89516133"/>
<dbReference type="KEGG" id="ece:Z2545"/>
<dbReference type="HOGENOM" id="CLU_222400_0_0_6"/>
<dbReference type="Proteomes" id="UP000000558">
    <property type="component" value="Chromosome"/>
</dbReference>
<dbReference type="Proteomes" id="UP000002519">
    <property type="component" value="Chromosome"/>
</dbReference>
<dbReference type="GO" id="GO:0000162">
    <property type="term" value="P:L-tryptophan biosynthetic process"/>
    <property type="evidence" value="ECO:0007669"/>
    <property type="project" value="UniProtKB-KW"/>
</dbReference>
<dbReference type="InterPro" id="IPR013205">
    <property type="entry name" value="Leader_Trp_op"/>
</dbReference>
<dbReference type="Pfam" id="PF08255">
    <property type="entry name" value="Leader_Trp"/>
    <property type="match status" value="1"/>
</dbReference>
<comment type="function">
    <text evidence="1">This protein is involved in control of the biosynthesis of tryptophan.</text>
</comment>
<accession>P0AD94</accession>
<accession>P03053</accession>
<proteinExistence type="inferred from homology"/>
<name>LPW_ECO57</name>
<sequence>MKAIFVLKGWWRTS</sequence>